<dbReference type="EMBL" id="CP001111">
    <property type="protein sequence ID" value="ACF50450.1"/>
    <property type="molecule type" value="Genomic_DNA"/>
</dbReference>
<dbReference type="RefSeq" id="WP_004145248.1">
    <property type="nucleotide sequence ID" value="NC_011071.1"/>
</dbReference>
<dbReference type="SMR" id="B4SKV2"/>
<dbReference type="STRING" id="391008.Smal_0745"/>
<dbReference type="GeneID" id="97259923"/>
<dbReference type="KEGG" id="smt:Smal_0745"/>
<dbReference type="eggNOG" id="COG0080">
    <property type="taxonomic scope" value="Bacteria"/>
</dbReference>
<dbReference type="HOGENOM" id="CLU_074237_2_0_6"/>
<dbReference type="OrthoDB" id="9802408at2"/>
<dbReference type="Proteomes" id="UP000001867">
    <property type="component" value="Chromosome"/>
</dbReference>
<dbReference type="GO" id="GO:0022625">
    <property type="term" value="C:cytosolic large ribosomal subunit"/>
    <property type="evidence" value="ECO:0007669"/>
    <property type="project" value="TreeGrafter"/>
</dbReference>
<dbReference type="GO" id="GO:0070180">
    <property type="term" value="F:large ribosomal subunit rRNA binding"/>
    <property type="evidence" value="ECO:0007669"/>
    <property type="project" value="UniProtKB-UniRule"/>
</dbReference>
<dbReference type="GO" id="GO:0003735">
    <property type="term" value="F:structural constituent of ribosome"/>
    <property type="evidence" value="ECO:0007669"/>
    <property type="project" value="InterPro"/>
</dbReference>
<dbReference type="GO" id="GO:0006412">
    <property type="term" value="P:translation"/>
    <property type="evidence" value="ECO:0007669"/>
    <property type="project" value="UniProtKB-UniRule"/>
</dbReference>
<dbReference type="CDD" id="cd00349">
    <property type="entry name" value="Ribosomal_L11"/>
    <property type="match status" value="1"/>
</dbReference>
<dbReference type="FunFam" id="1.10.10.250:FF:000001">
    <property type="entry name" value="50S ribosomal protein L11"/>
    <property type="match status" value="1"/>
</dbReference>
<dbReference type="FunFam" id="3.30.1550.10:FF:000001">
    <property type="entry name" value="50S ribosomal protein L11"/>
    <property type="match status" value="1"/>
</dbReference>
<dbReference type="Gene3D" id="1.10.10.250">
    <property type="entry name" value="Ribosomal protein L11, C-terminal domain"/>
    <property type="match status" value="1"/>
</dbReference>
<dbReference type="Gene3D" id="3.30.1550.10">
    <property type="entry name" value="Ribosomal protein L11/L12, N-terminal domain"/>
    <property type="match status" value="1"/>
</dbReference>
<dbReference type="HAMAP" id="MF_00736">
    <property type="entry name" value="Ribosomal_uL11"/>
    <property type="match status" value="1"/>
</dbReference>
<dbReference type="InterPro" id="IPR000911">
    <property type="entry name" value="Ribosomal_uL11"/>
</dbReference>
<dbReference type="InterPro" id="IPR006519">
    <property type="entry name" value="Ribosomal_uL11_bac-typ"/>
</dbReference>
<dbReference type="InterPro" id="IPR020783">
    <property type="entry name" value="Ribosomal_uL11_C"/>
</dbReference>
<dbReference type="InterPro" id="IPR036769">
    <property type="entry name" value="Ribosomal_uL11_C_sf"/>
</dbReference>
<dbReference type="InterPro" id="IPR020785">
    <property type="entry name" value="Ribosomal_uL11_CS"/>
</dbReference>
<dbReference type="InterPro" id="IPR020784">
    <property type="entry name" value="Ribosomal_uL11_N"/>
</dbReference>
<dbReference type="InterPro" id="IPR036796">
    <property type="entry name" value="Ribosomal_uL11_N_sf"/>
</dbReference>
<dbReference type="NCBIfam" id="TIGR01632">
    <property type="entry name" value="L11_bact"/>
    <property type="match status" value="1"/>
</dbReference>
<dbReference type="PANTHER" id="PTHR11661">
    <property type="entry name" value="60S RIBOSOMAL PROTEIN L12"/>
    <property type="match status" value="1"/>
</dbReference>
<dbReference type="PANTHER" id="PTHR11661:SF1">
    <property type="entry name" value="LARGE RIBOSOMAL SUBUNIT PROTEIN UL11M"/>
    <property type="match status" value="1"/>
</dbReference>
<dbReference type="Pfam" id="PF00298">
    <property type="entry name" value="Ribosomal_L11"/>
    <property type="match status" value="1"/>
</dbReference>
<dbReference type="Pfam" id="PF03946">
    <property type="entry name" value="Ribosomal_L11_N"/>
    <property type="match status" value="1"/>
</dbReference>
<dbReference type="SMART" id="SM00649">
    <property type="entry name" value="RL11"/>
    <property type="match status" value="1"/>
</dbReference>
<dbReference type="SUPFAM" id="SSF54747">
    <property type="entry name" value="Ribosomal L11/L12e N-terminal domain"/>
    <property type="match status" value="1"/>
</dbReference>
<dbReference type="SUPFAM" id="SSF46906">
    <property type="entry name" value="Ribosomal protein L11, C-terminal domain"/>
    <property type="match status" value="1"/>
</dbReference>
<dbReference type="PROSITE" id="PS00359">
    <property type="entry name" value="RIBOSOMAL_L11"/>
    <property type="match status" value="1"/>
</dbReference>
<accession>B4SKV2</accession>
<comment type="function">
    <text evidence="1">Forms part of the ribosomal stalk which helps the ribosome interact with GTP-bound translation factors.</text>
</comment>
<comment type="subunit">
    <text evidence="1">Part of the ribosomal stalk of the 50S ribosomal subunit. Interacts with L10 and the large rRNA to form the base of the stalk. L10 forms an elongated spine to which L12 dimers bind in a sequential fashion forming a multimeric L10(L12)X complex.</text>
</comment>
<comment type="PTM">
    <text evidence="1">One or more lysine residues are methylated.</text>
</comment>
<comment type="similarity">
    <text evidence="1">Belongs to the universal ribosomal protein uL11 family.</text>
</comment>
<proteinExistence type="inferred from homology"/>
<reference key="1">
    <citation type="submission" date="2008-06" db="EMBL/GenBank/DDBJ databases">
        <title>Complete sequence of Stenotrophomonas maltophilia R551-3.</title>
        <authorList>
            <consortium name="US DOE Joint Genome Institute"/>
            <person name="Lucas S."/>
            <person name="Copeland A."/>
            <person name="Lapidus A."/>
            <person name="Glavina del Rio T."/>
            <person name="Dalin E."/>
            <person name="Tice H."/>
            <person name="Pitluck S."/>
            <person name="Chain P."/>
            <person name="Malfatti S."/>
            <person name="Shin M."/>
            <person name="Vergez L."/>
            <person name="Lang D."/>
            <person name="Schmutz J."/>
            <person name="Larimer F."/>
            <person name="Land M."/>
            <person name="Hauser L."/>
            <person name="Kyrpides N."/>
            <person name="Mikhailova N."/>
            <person name="Taghavi S."/>
            <person name="Monchy S."/>
            <person name="Newman L."/>
            <person name="Vangronsveld J."/>
            <person name="van der Lelie D."/>
            <person name="Richardson P."/>
        </authorList>
    </citation>
    <scope>NUCLEOTIDE SEQUENCE [LARGE SCALE GENOMIC DNA]</scope>
    <source>
        <strain>R551-3</strain>
    </source>
</reference>
<protein>
    <recommendedName>
        <fullName evidence="1">Large ribosomal subunit protein uL11</fullName>
    </recommendedName>
    <alternativeName>
        <fullName evidence="2">50S ribosomal protein L11</fullName>
    </alternativeName>
</protein>
<gene>
    <name evidence="1" type="primary">rplK</name>
    <name type="ordered locus">Smal_0745</name>
</gene>
<sequence length="142" mass="14907">MAKKVVGYIKLQVKAGQANPSPPVGPALGQRGLNIMEFCKAFNAATQKLEPGLPVPVIITAYSDRTFTFITKSTPATTLLKKAAGISSGSKRPNTEKVGKVTRKQLEEIAKAKEPDLTAADLDAAVRTIAGSARSMGLVVEG</sequence>
<keyword id="KW-0488">Methylation</keyword>
<keyword id="KW-0687">Ribonucleoprotein</keyword>
<keyword id="KW-0689">Ribosomal protein</keyword>
<keyword id="KW-0694">RNA-binding</keyword>
<keyword id="KW-0699">rRNA-binding</keyword>
<evidence type="ECO:0000255" key="1">
    <source>
        <dbReference type="HAMAP-Rule" id="MF_00736"/>
    </source>
</evidence>
<evidence type="ECO:0000305" key="2"/>
<name>RL11_STRM5</name>
<feature type="chain" id="PRO_1000195719" description="Large ribosomal subunit protein uL11">
    <location>
        <begin position="1"/>
        <end position="142"/>
    </location>
</feature>
<organism>
    <name type="scientific">Stenotrophomonas maltophilia (strain R551-3)</name>
    <dbReference type="NCBI Taxonomy" id="391008"/>
    <lineage>
        <taxon>Bacteria</taxon>
        <taxon>Pseudomonadati</taxon>
        <taxon>Pseudomonadota</taxon>
        <taxon>Gammaproteobacteria</taxon>
        <taxon>Lysobacterales</taxon>
        <taxon>Lysobacteraceae</taxon>
        <taxon>Stenotrophomonas</taxon>
        <taxon>Stenotrophomonas maltophilia group</taxon>
    </lineage>
</organism>